<dbReference type="EC" id="2.7.4.2" evidence="6"/>
<dbReference type="EMBL" id="HG970335">
    <property type="protein sequence ID" value="CEF85588.1"/>
    <property type="molecule type" value="Genomic_DNA"/>
</dbReference>
<dbReference type="RefSeq" id="XP_011327956.1">
    <property type="nucleotide sequence ID" value="XM_011329654.1"/>
</dbReference>
<dbReference type="SMR" id="I1RZD0"/>
<dbReference type="FunCoup" id="I1RZD0">
    <property type="interactions" value="122"/>
</dbReference>
<dbReference type="STRING" id="229533.I1RZD0"/>
<dbReference type="KEGG" id="fgr:FGSG_09764"/>
<dbReference type="VEuPathDB" id="FungiDB:FGRAMPH1_01G26385"/>
<dbReference type="eggNOG" id="KOG4519">
    <property type="taxonomic scope" value="Eukaryota"/>
</dbReference>
<dbReference type="HOGENOM" id="CLU_022059_1_0_1"/>
<dbReference type="InParanoid" id="I1RZD0"/>
<dbReference type="OrthoDB" id="88839at110618"/>
<dbReference type="UniPathway" id="UPA00057">
    <property type="reaction ID" value="UER00099"/>
</dbReference>
<dbReference type="Proteomes" id="UP000070720">
    <property type="component" value="Chromosome 4"/>
</dbReference>
<dbReference type="GO" id="GO:0005777">
    <property type="term" value="C:peroxisome"/>
    <property type="evidence" value="ECO:0007669"/>
    <property type="project" value="TreeGrafter"/>
</dbReference>
<dbReference type="GO" id="GO:0005524">
    <property type="term" value="F:ATP binding"/>
    <property type="evidence" value="ECO:0007669"/>
    <property type="project" value="UniProtKB-KW"/>
</dbReference>
<dbReference type="GO" id="GO:0004631">
    <property type="term" value="F:phosphomevalonate kinase activity"/>
    <property type="evidence" value="ECO:0007669"/>
    <property type="project" value="UniProtKB-EC"/>
</dbReference>
<dbReference type="GO" id="GO:0006696">
    <property type="term" value="P:ergosterol biosynthetic process"/>
    <property type="evidence" value="ECO:0007669"/>
    <property type="project" value="TreeGrafter"/>
</dbReference>
<dbReference type="GO" id="GO:0010142">
    <property type="term" value="P:farnesyl diphosphate biosynthetic process, mevalonate pathway"/>
    <property type="evidence" value="ECO:0007669"/>
    <property type="project" value="TreeGrafter"/>
</dbReference>
<dbReference type="GO" id="GO:0019287">
    <property type="term" value="P:isopentenyl diphosphate biosynthetic process, mevalonate pathway"/>
    <property type="evidence" value="ECO:0007669"/>
    <property type="project" value="UniProtKB-UniPathway"/>
</dbReference>
<dbReference type="FunFam" id="3.30.70.890:FF:000018">
    <property type="entry name" value="Phosphomevalonate kinase"/>
    <property type="match status" value="1"/>
</dbReference>
<dbReference type="Gene3D" id="3.30.230.10">
    <property type="match status" value="1"/>
</dbReference>
<dbReference type="Gene3D" id="3.30.70.890">
    <property type="entry name" value="GHMP kinase, C-terminal domain"/>
    <property type="match status" value="1"/>
</dbReference>
<dbReference type="InterPro" id="IPR016005">
    <property type="entry name" value="Erg8"/>
</dbReference>
<dbReference type="InterPro" id="IPR036554">
    <property type="entry name" value="GHMP_kinase_C_sf"/>
</dbReference>
<dbReference type="InterPro" id="IPR006204">
    <property type="entry name" value="GHMP_kinase_N_dom"/>
</dbReference>
<dbReference type="InterPro" id="IPR035102">
    <property type="entry name" value="Phosphomevalonate_kinase"/>
</dbReference>
<dbReference type="InterPro" id="IPR020568">
    <property type="entry name" value="Ribosomal_Su5_D2-typ_SF"/>
</dbReference>
<dbReference type="InterPro" id="IPR014721">
    <property type="entry name" value="Ribsml_uS5_D2-typ_fold_subgr"/>
</dbReference>
<dbReference type="PANTHER" id="PTHR31814">
    <property type="match status" value="1"/>
</dbReference>
<dbReference type="PANTHER" id="PTHR31814:SF2">
    <property type="entry name" value="PHOSPHOMEVALONATE KINASE"/>
    <property type="match status" value="1"/>
</dbReference>
<dbReference type="Pfam" id="PF00288">
    <property type="entry name" value="GHMP_kinases_N"/>
    <property type="match status" value="1"/>
</dbReference>
<dbReference type="PIRSF" id="PIRSF017288">
    <property type="entry name" value="PMK_GHMP_euk"/>
    <property type="match status" value="1"/>
</dbReference>
<dbReference type="SUPFAM" id="SSF55060">
    <property type="entry name" value="GHMP Kinase, C-terminal domain"/>
    <property type="match status" value="1"/>
</dbReference>
<dbReference type="SUPFAM" id="SSF54211">
    <property type="entry name" value="Ribosomal protein S5 domain 2-like"/>
    <property type="match status" value="1"/>
</dbReference>
<proteinExistence type="evidence at transcript level"/>
<protein>
    <recommendedName>
        <fullName evidence="4">Phosphomevalonate kinase ERG8</fullName>
        <ecNumber evidence="6">2.7.4.2</ecNumber>
    </recommendedName>
    <alternativeName>
        <fullName evidence="4">Ergosterol biosynthesis protein 8</fullName>
    </alternativeName>
</protein>
<organism>
    <name type="scientific">Gibberella zeae (strain ATCC MYA-4620 / CBS 123657 / FGSC 9075 / NRRL 31084 / PH-1)</name>
    <name type="common">Wheat head blight fungus</name>
    <name type="synonym">Fusarium graminearum</name>
    <dbReference type="NCBI Taxonomy" id="229533"/>
    <lineage>
        <taxon>Eukaryota</taxon>
        <taxon>Fungi</taxon>
        <taxon>Dikarya</taxon>
        <taxon>Ascomycota</taxon>
        <taxon>Pezizomycotina</taxon>
        <taxon>Sordariomycetes</taxon>
        <taxon>Hypocreomycetidae</taxon>
        <taxon>Hypocreales</taxon>
        <taxon>Nectriaceae</taxon>
        <taxon>Fusarium</taxon>
    </lineage>
</organism>
<sequence>MSLKHPTIAVSAPGKVFLAGGYLVLDQEYTAFVFGLNARINIIAGDIHTTAGVQLTEIVVDSPQFLDAQWRYGYHLAGEGGGIKVTQLQVGAQINPNPFVETTLSYALTYIDRVAGHRPSHSLASARLIILADNDYYSHSESDTTRSGRFAKFPVTLSNANKTGLGSSAALVTSLTASLLVHYLPEDLFSIDSDKGKRTLHNLAQAAHCAAQGKVGSGFDVATAVYGSCRYRRFSPATLNKIPEPGVAGFADALVKLVDGESEWDVEVLKDAVTMPKGVVLRMCDVDCGSKTVGMVKKVLAWKSSNPEDSKTLWDELQSRNEQLIATLNAGDVAQLPEKINAVREKIREMGSASDVPIEPESQTELLDALSTVEGVHGGVVPGAGGYDALALLMKDDEETKQRVEVFLEKWAAEKGTKVKLLAVKGEMEGVRSESLDVYAGWV</sequence>
<keyword id="KW-0067">ATP-binding</keyword>
<keyword id="KW-0418">Kinase</keyword>
<keyword id="KW-0444">Lipid biosynthesis</keyword>
<keyword id="KW-0443">Lipid metabolism</keyword>
<keyword id="KW-0547">Nucleotide-binding</keyword>
<keyword id="KW-1185">Reference proteome</keyword>
<keyword id="KW-0752">Steroid biosynthesis</keyword>
<keyword id="KW-0753">Steroid metabolism</keyword>
<keyword id="KW-0756">Sterol biosynthesis</keyword>
<keyword id="KW-1207">Sterol metabolism</keyword>
<keyword id="KW-0808">Transferase</keyword>
<evidence type="ECO:0000250" key="1">
    <source>
        <dbReference type="UniProtKB" id="P24521"/>
    </source>
</evidence>
<evidence type="ECO:0000255" key="2"/>
<evidence type="ECO:0000269" key="3">
    <source>
    </source>
</evidence>
<evidence type="ECO:0000303" key="4">
    <source>
    </source>
</evidence>
<evidence type="ECO:0000305" key="5"/>
<evidence type="ECO:0000305" key="6">
    <source>
    </source>
</evidence>
<comment type="function">
    <text evidence="1 6">Phosphomevalonate kinase; part of the second module of ergosterol biosynthesis pathway that includes the middle steps of the pathway (By similarity). ERG8 converts 5-phosphomevalonate to 5-diphosphomevalonate (By similarity). The second module is carried out in the vacuole and involves the formation of farnesyl diphosphate, which is also an important intermediate in the biosynthesis of ubiquinone, dolichol, heme and prenylated proteins. Activity by the mevalonate kinase ERG12 (FG05912) first converts mevalonate into 5-phosphomevalonate. 5-phosphomevalonate is then further converted to 5-diphosphomevalonate by the phosphomevalonate kinase ERG8 (FG09764). The diphosphomevalonate decarboxylase ERG19 (FG10424) then produces isopentenyl diphosphate. The isopentenyl-diphosphate delta-isomerase IDI1 (FG09722) then catalyzes the 1,3-allylic rearrangement of the homoallylic substrate isopentenyl (IPP) to its highly electrophilic allylic isomer, dimethylallyl diphosphate (DMAPP). Finally the farnesyl diphosphate synthase ERG20 (FG06784) catalyzes the sequential condensation of isopentenyl pyrophosphate with dimethylallyl pyrophosphate, and then with the resultant geranylpyrophosphate to the ultimate product farnesyl pyrophosphate (Probable).</text>
</comment>
<comment type="catalytic activity">
    <reaction evidence="6">
        <text>(R)-5-phosphomevalonate + ATP = (R)-5-diphosphomevalonate + ADP</text>
        <dbReference type="Rhea" id="RHEA:16341"/>
        <dbReference type="ChEBI" id="CHEBI:30616"/>
        <dbReference type="ChEBI" id="CHEBI:57557"/>
        <dbReference type="ChEBI" id="CHEBI:58146"/>
        <dbReference type="ChEBI" id="CHEBI:456216"/>
        <dbReference type="EC" id="2.7.4.2"/>
    </reaction>
    <physiologicalReaction direction="left-to-right" evidence="6">
        <dbReference type="Rhea" id="RHEA:16342"/>
    </physiologicalReaction>
</comment>
<comment type="pathway">
    <text evidence="6">Isoprenoid biosynthesis; isopentenyl diphosphate biosynthesis via mevalonate pathway; isopentenyl diphosphate from (R)-mevalonate: step 2/3.</text>
</comment>
<comment type="induction">
    <text evidence="3">Expression is regulated by the Zn(2)-C6 fungal-type transcription factor FgSR which binds directly to the promoter.</text>
</comment>
<comment type="similarity">
    <text evidence="5">Belongs to the GHMP kinase family. Mevalonate kinase subfamily.</text>
</comment>
<gene>
    <name evidence="4" type="primary">ERG8</name>
    <name type="ORF">FG09764</name>
    <name type="ORF">FGRAMPH1_01T26385</name>
</gene>
<name>ERG8_GIBZE</name>
<feature type="chain" id="PRO_0000454674" description="Phosphomevalonate kinase ERG8">
    <location>
        <begin position="1"/>
        <end position="443"/>
    </location>
</feature>
<feature type="binding site" evidence="2">
    <location>
        <begin position="160"/>
        <end position="170"/>
    </location>
    <ligand>
        <name>ATP</name>
        <dbReference type="ChEBI" id="CHEBI:30616"/>
    </ligand>
</feature>
<accession>I1RZD0</accession>
<reference key="1">
    <citation type="journal article" date="2007" name="Science">
        <title>The Fusarium graminearum genome reveals a link between localized polymorphism and pathogen specialization.</title>
        <authorList>
            <person name="Cuomo C.A."/>
            <person name="Gueldener U."/>
            <person name="Xu J.-R."/>
            <person name="Trail F."/>
            <person name="Turgeon B.G."/>
            <person name="Di Pietro A."/>
            <person name="Walton J.D."/>
            <person name="Ma L.-J."/>
            <person name="Baker S.E."/>
            <person name="Rep M."/>
            <person name="Adam G."/>
            <person name="Antoniw J."/>
            <person name="Baldwin T."/>
            <person name="Calvo S.E."/>
            <person name="Chang Y.-L."/>
            <person name="DeCaprio D."/>
            <person name="Gale L.R."/>
            <person name="Gnerre S."/>
            <person name="Goswami R.S."/>
            <person name="Hammond-Kosack K."/>
            <person name="Harris L.J."/>
            <person name="Hilburn K."/>
            <person name="Kennell J.C."/>
            <person name="Kroken S."/>
            <person name="Magnuson J.K."/>
            <person name="Mannhaupt G."/>
            <person name="Mauceli E.W."/>
            <person name="Mewes H.-W."/>
            <person name="Mitterbauer R."/>
            <person name="Muehlbauer G."/>
            <person name="Muensterkoetter M."/>
            <person name="Nelson D."/>
            <person name="O'Donnell K."/>
            <person name="Ouellet T."/>
            <person name="Qi W."/>
            <person name="Quesneville H."/>
            <person name="Roncero M.I.G."/>
            <person name="Seong K.-Y."/>
            <person name="Tetko I.V."/>
            <person name="Urban M."/>
            <person name="Waalwijk C."/>
            <person name="Ward T.J."/>
            <person name="Yao J."/>
            <person name="Birren B.W."/>
            <person name="Kistler H.C."/>
        </authorList>
    </citation>
    <scope>NUCLEOTIDE SEQUENCE [LARGE SCALE GENOMIC DNA]</scope>
    <source>
        <strain>ATCC MYA-4620 / CBS 123657 / FGSC 9075 / NRRL 31084 / PH-1</strain>
    </source>
</reference>
<reference key="2">
    <citation type="journal article" date="2010" name="Nature">
        <title>Comparative genomics reveals mobile pathogenicity chromosomes in Fusarium.</title>
        <authorList>
            <person name="Ma L.-J."/>
            <person name="van der Does H.C."/>
            <person name="Borkovich K.A."/>
            <person name="Coleman J.J."/>
            <person name="Daboussi M.-J."/>
            <person name="Di Pietro A."/>
            <person name="Dufresne M."/>
            <person name="Freitag M."/>
            <person name="Grabherr M."/>
            <person name="Henrissat B."/>
            <person name="Houterman P.M."/>
            <person name="Kang S."/>
            <person name="Shim W.-B."/>
            <person name="Woloshuk C."/>
            <person name="Xie X."/>
            <person name="Xu J.-R."/>
            <person name="Antoniw J."/>
            <person name="Baker S.E."/>
            <person name="Bluhm B.H."/>
            <person name="Breakspear A."/>
            <person name="Brown D.W."/>
            <person name="Butchko R.A.E."/>
            <person name="Chapman S."/>
            <person name="Coulson R."/>
            <person name="Coutinho P.M."/>
            <person name="Danchin E.G.J."/>
            <person name="Diener A."/>
            <person name="Gale L.R."/>
            <person name="Gardiner D.M."/>
            <person name="Goff S."/>
            <person name="Hammond-Kosack K.E."/>
            <person name="Hilburn K."/>
            <person name="Hua-Van A."/>
            <person name="Jonkers W."/>
            <person name="Kazan K."/>
            <person name="Kodira C.D."/>
            <person name="Koehrsen M."/>
            <person name="Kumar L."/>
            <person name="Lee Y.-H."/>
            <person name="Li L."/>
            <person name="Manners J.M."/>
            <person name="Miranda-Saavedra D."/>
            <person name="Mukherjee M."/>
            <person name="Park G."/>
            <person name="Park J."/>
            <person name="Park S.-Y."/>
            <person name="Proctor R.H."/>
            <person name="Regev A."/>
            <person name="Ruiz-Roldan M.C."/>
            <person name="Sain D."/>
            <person name="Sakthikumar S."/>
            <person name="Sykes S."/>
            <person name="Schwartz D.C."/>
            <person name="Turgeon B.G."/>
            <person name="Wapinski I."/>
            <person name="Yoder O."/>
            <person name="Young S."/>
            <person name="Zeng Q."/>
            <person name="Zhou S."/>
            <person name="Galagan J."/>
            <person name="Cuomo C.A."/>
            <person name="Kistler H.C."/>
            <person name="Rep M."/>
        </authorList>
    </citation>
    <scope>GENOME REANNOTATION</scope>
    <source>
        <strain>ATCC MYA-4620 / CBS 123657 / FGSC 9075 / NRRL 31084 / PH-1</strain>
    </source>
</reference>
<reference key="3">
    <citation type="journal article" date="2015" name="BMC Genomics">
        <title>The completed genome sequence of the pathogenic ascomycete fungus Fusarium graminearum.</title>
        <authorList>
            <person name="King R."/>
            <person name="Urban M."/>
            <person name="Hammond-Kosack M.C.U."/>
            <person name="Hassani-Pak K."/>
            <person name="Hammond-Kosack K.E."/>
        </authorList>
    </citation>
    <scope>NUCLEOTIDE SEQUENCE [LARGE SCALE GENOMIC DNA]</scope>
    <source>
        <strain>ATCC MYA-4620 / CBS 123657 / FGSC 9075 / NRRL 31084 / PH-1</strain>
    </source>
</reference>
<reference key="4">
    <citation type="journal article" date="2019" name="Nat. Commun.">
        <title>A phosphorylated transcription factor regulates sterol biosynthesis in Fusarium graminearum.</title>
        <authorList>
            <person name="Liu Z."/>
            <person name="Jian Y."/>
            <person name="Chen Y."/>
            <person name="Kistler H.C."/>
            <person name="He P."/>
            <person name="Ma Z."/>
            <person name="Yin Y."/>
        </authorList>
    </citation>
    <scope>FUNCTION</scope>
    <scope>INDUCTION</scope>
</reference>